<evidence type="ECO:0000250" key="1">
    <source>
        <dbReference type="UniProtKB" id="Q12437"/>
    </source>
</evidence>
<evidence type="ECO:0000255" key="2"/>
<evidence type="ECO:0000255" key="3">
    <source>
        <dbReference type="PROSITE-ProRule" id="PRU00498"/>
    </source>
</evidence>
<evidence type="ECO:0000269" key="4">
    <source>
    </source>
</evidence>
<evidence type="ECO:0000269" key="5">
    <source>
    </source>
</evidence>
<evidence type="ECO:0000269" key="6">
    <source>
    </source>
</evidence>
<evidence type="ECO:0000269" key="7">
    <source>
    </source>
</evidence>
<evidence type="ECO:0000303" key="8">
    <source>
    </source>
</evidence>
<evidence type="ECO:0000303" key="9">
    <source>
    </source>
</evidence>
<evidence type="ECO:0000305" key="10"/>
<evidence type="ECO:0000305" key="11">
    <source>
    </source>
</evidence>
<evidence type="ECO:0000305" key="12">
    <source>
    </source>
</evidence>
<evidence type="ECO:0000305" key="13">
    <source>
    </source>
</evidence>
<evidence type="ECO:0000312" key="14">
    <source>
        <dbReference type="EMBL" id="AAZ95014.1"/>
    </source>
</evidence>
<dbReference type="EC" id="1.-.-.-" evidence="1"/>
<dbReference type="EMBL" id="DQ149246">
    <property type="protein sequence ID" value="AAZ95014.1"/>
    <property type="molecule type" value="Genomic_DNA"/>
</dbReference>
<dbReference type="GlyCosmos" id="Q30DW7">
    <property type="glycosylation" value="3 sites, No reported glycans"/>
</dbReference>
<dbReference type="GO" id="GO:0016646">
    <property type="term" value="F:oxidoreductase activity, acting on the CH-NH group of donors, NAD or NADP as acceptor"/>
    <property type="evidence" value="ECO:0007669"/>
    <property type="project" value="TreeGrafter"/>
</dbReference>
<dbReference type="Gene3D" id="3.40.50.720">
    <property type="entry name" value="NAD(P)-binding Rossmann-like Domain"/>
    <property type="match status" value="1"/>
</dbReference>
<dbReference type="InterPro" id="IPR036291">
    <property type="entry name" value="NAD(P)-bd_dom_sf"/>
</dbReference>
<dbReference type="InterPro" id="IPR051606">
    <property type="entry name" value="Polyketide_Oxido-like"/>
</dbReference>
<dbReference type="PANTHER" id="PTHR43355">
    <property type="entry name" value="FLAVIN REDUCTASE (NADPH)"/>
    <property type="match status" value="1"/>
</dbReference>
<dbReference type="PANTHER" id="PTHR43355:SF2">
    <property type="entry name" value="FLAVIN REDUCTASE (NADPH)"/>
    <property type="match status" value="1"/>
</dbReference>
<dbReference type="SUPFAM" id="SSF51735">
    <property type="entry name" value="NAD(P)-binding Rossmann-fold domains"/>
    <property type="match status" value="1"/>
</dbReference>
<keyword id="KW-0325">Glycoprotein</keyword>
<keyword id="KW-0560">Oxidoreductase</keyword>
<keyword id="KW-0732">Signal</keyword>
<comment type="function">
    <text evidence="1 4 5 8 11 12 13">Averufin oxidase A; part of the fragmented gene cluster that mediates the biosynthesis of dothistromin (DOTH), a polyketide toxin very similar in structure to the aflatoxin precursor, versicolorin B (PubMed:12039746, PubMed:17683963, PubMed:22069571, PubMed:23207690, PubMed:23448391). The first step of the pathway is the conversion of acetate to norsolorinic acid (NOR) and requires the fatty acid synthase subunits hexA and hexB, as well as the polyketide synthase pksA (PubMed:16649078, PubMed:23207690). PksA combines a hexanoyl starter unit and 7 malonyl-CoA extender units to synthesize the precursor NOR (By similarity). The hexanoyl starter unit is provided to the acyl-carrier protein (ACP) domain by the fungal fatty acid synthase hexA/hexB (By similarity). The second step is the conversion of NOR to averantin (AVN) and requires the norsolorinic acid ketoreductase nor1, which catalyzes the dehydration of norsolorinic acid to form (1'S)-averantin (PubMed:23207690). The cytochrome P450 monooxygenase avnA then catalyzes the hydroxylation of AVN to 5'hydroxyaverantin (HAVN) (PubMed:23207690). The next step is performed by adhA that transforms HAVN to averufin (AVF) (PubMed:23207690). Averufin might then be converted to hydroxyversicolorone by cypX and avfA (PubMed:23207690). Hydroxyversicolorone is further converted versiconal hemiacetal acetate (VHA) by moxY (PubMed:23207690). VHA is then the substrate for the versiconal hemiacetal acetate esterase est1 to yield versiconal (VAL) (PubMed:23207690). Versicolorin B synthase vbsA then converts VAL to versicolorin B (VERB) by closing the bisfuran ring (PubMed:16649078, PubMed:23207690). Then, the activity of the versicolorin B desaturase verB leads to versicolorin A (VERA) (PubMed:23207690). DotB, a predicted chloroperoxidase, may perform epoxidation of the A-ring of VERA (PubMed:23207690). Alternatively, a cytochrome P450, such as cypX or avnA could catalyze this step (PubMed:23207690). It is also possible that another, uncharacterized, cytochrome P450 enzyme is responsible for this step (PubMed:23207690). Opening of the epoxide could potentially be achieved by the epoxide hydrolase epoA (PubMed:23207690). However, epoA seems not to be required for DOTH biosynthesis, but other epoxide hydrolases may have the ability to complement this hydrolysis (PubMed:23207690). Alternatively, opening of the epoxide ring could be achieved non-enzymatically (PubMed:23207690). The next step is the deoxygenation of ring A to yield the 5,8-dihydroxyanthraquinone which is most likely catalyzed by the NADPH dehydrogenase encoded by ver1 (PubMed:23207690). The last stages of DOTH biosynthesis are proposed to involve hydroxylation of the bisfuran (PubMed:23207690). OrdB and norB might have oxidative roles here (PubMed:23207690). An alternative possibility is that cytochrome P450 monoogenases such as avnA and cypX might perform these steps in addition to previously proposed steps (PubMed:23207690).</text>
</comment>
<comment type="pathway">
    <text evidence="8 12">Mycotoxin biosynthesis.</text>
</comment>
<comment type="induction">
    <text evidence="6 7">Expression is positively regulated by the dothistromin-specific transcription factor aflR (PubMed:23207690). Dothistromin biosynthetic proteins are co-regulated, showing a high level of expression at ealy exponential phase with a subsequent decline in older cultures (PubMed:17683963).</text>
</comment>
<comment type="similarity">
    <text evidence="10">Belongs to the avfA family.</text>
</comment>
<organism>
    <name type="scientific">Dothistroma septosporum</name>
    <name type="common">Red band needle blight fungus</name>
    <name type="synonym">Mycosphaerella pini</name>
    <dbReference type="NCBI Taxonomy" id="64363"/>
    <lineage>
        <taxon>Eukaryota</taxon>
        <taxon>Fungi</taxon>
        <taxon>Dikarya</taxon>
        <taxon>Ascomycota</taxon>
        <taxon>Pezizomycotina</taxon>
        <taxon>Dothideomycetes</taxon>
        <taxon>Dothideomycetidae</taxon>
        <taxon>Mycosphaerellales</taxon>
        <taxon>Mycosphaerellaceae</taxon>
        <taxon>Dothistroma</taxon>
    </lineage>
</organism>
<proteinExistence type="evidence at transcript level"/>
<gene>
    <name evidence="9" type="primary">avfA</name>
</gene>
<reference key="1">
    <citation type="journal article" date="2006" name="Mycopathologia">
        <title>A polyketide synthase gene required for biosynthesis of the aflatoxin-like toxin, dothistromin.</title>
        <authorList>
            <person name="Bradshaw R.E."/>
            <person name="Jin H."/>
            <person name="Morgan B.S."/>
            <person name="Schwelm A."/>
            <person name="Teddy O.R."/>
            <person name="Young C.A."/>
            <person name="Zhang S."/>
        </authorList>
    </citation>
    <scope>NUCLEOTIDE SEQUENCE [GENOMIC DNA]</scope>
    <source>
        <strain>NZE7</strain>
    </source>
</reference>
<reference evidence="14" key="2">
    <citation type="journal article" date="2007" name="Fungal Genet. Biol.">
        <title>A fragmented aflatoxin-like gene cluster in the forest pathogen Dothistroma septosporum.</title>
        <authorList>
            <person name="Zhang S."/>
            <person name="Schwelm A."/>
            <person name="Jin H."/>
            <person name="Collins L.J."/>
            <person name="Bradshaw R.E."/>
        </authorList>
    </citation>
    <scope>NUCLEOTIDE SEQUENCE [GENOMIC DNA]</scope>
    <scope>INDUCTION</scope>
    <source>
        <strain>NZE7</strain>
    </source>
</reference>
<reference key="3">
    <citation type="submission" date="2010-07" db="EMBL/GenBank/DDBJ databases">
        <authorList>
            <person name="Zhang S."/>
            <person name="Bradshaw R.E."/>
        </authorList>
    </citation>
    <scope>NUCLEOTIDE SEQUENCE [GENOMIC DNA]</scope>
    <source>
        <strain>NZE1 / ATCC MYA-605</strain>
    </source>
</reference>
<reference key="4">
    <citation type="journal article" date="2002" name="Appl. Environ. Microbiol.">
        <title>Dothistroma pini, a forest pathogen, contains homologs of aflatoxin biosynthetic pathway genes.</title>
        <authorList>
            <person name="Bradshaw R.E."/>
            <person name="Bhatnagar D."/>
            <person name="Ganley R.J."/>
            <person name="Gillman C.J."/>
            <person name="Monahan B.J."/>
            <person name="Seconi J.M."/>
        </authorList>
    </citation>
    <scope>FUNCTION</scope>
    <source>
        <strain>ATCC MYA-605</strain>
    </source>
</reference>
<reference key="5">
    <citation type="journal article" date="2010" name="Toxins">
        <title>Genetics of dothistromin biosynthesis of Dothistroma septosporum: an update.</title>
        <authorList>
            <person name="Schwelm A."/>
            <person name="Bradshaw R.E."/>
        </authorList>
    </citation>
    <scope>REVIEW ON FUNCTION</scope>
    <scope>PATHWAY</scope>
</reference>
<reference key="6">
    <citation type="journal article" date="2013" name="Fungal Genet. Biol.">
        <title>Dothistromin genes at multiple separate loci are regulated by AflR.</title>
        <authorList>
            <person name="Chettri P."/>
            <person name="Ehrlich K.C."/>
            <person name="Cary J.W."/>
            <person name="Collemare J."/>
            <person name="Cox M.P."/>
            <person name="Griffiths S.A."/>
            <person name="Olson M.A."/>
            <person name="de Wit P.J."/>
            <person name="Bradshaw R.E."/>
        </authorList>
    </citation>
    <scope>FUNCTION</scope>
    <scope>INDUCTION</scope>
    <scope>PATHWAY</scope>
</reference>
<reference key="7">
    <citation type="journal article" date="2013" name="New Phytol.">
        <title>Fragmentation of an aflatoxin-like gene cluster in a forest pathogen.</title>
        <authorList>
            <person name="Bradshaw R.E."/>
            <person name="Slot J.C."/>
            <person name="Moore G.G."/>
            <person name="Chettri P."/>
            <person name="de Wit P.J."/>
            <person name="Ehrlich K.C."/>
            <person name="Ganley A.R."/>
            <person name="Olson M.A."/>
            <person name="Rokas A."/>
            <person name="Carbone I."/>
            <person name="Cox M.P."/>
        </authorList>
    </citation>
    <scope>FUNCTION</scope>
</reference>
<accession>Q30DW7</accession>
<sequence length="301" mass="32563">MPTYALLGATGATGSAILRCLLASPPPDLDLNILVRSKQKLLKSFPTLTTTISPRIHIIQGNSTDTIALQQCLEDASVAFMCVADNASNKGVSLTADTVTAIVTTLGMLRKLHGSAYNAPTILQLRSASLNPKLSCQVPRLVYNIVSFCLHYSHLDIVKACEHYEAAAAKGLLSYIYVDPPTIHDAFGPNRTGHKLISCKPDVCDKQETALSYADLGAGFVEIASRKEDFLNQPVGVTATGKAKETWGVLAGFLFDGAKGRARAWWEEERPMSKPQNLFLYCVMVSLAAVVLVQYTGTMNR</sequence>
<name>AVFA_DOTSE</name>
<protein>
    <recommendedName>
        <fullName evidence="1">Averufin oxidase A</fullName>
        <ecNumber evidence="1">1.-.-.-</ecNumber>
    </recommendedName>
    <alternativeName>
        <fullName evidence="9">Dothistromin biosynthesis protein avfA</fullName>
    </alternativeName>
</protein>
<feature type="signal peptide" evidence="2">
    <location>
        <begin position="1"/>
        <end position="23"/>
    </location>
</feature>
<feature type="chain" id="PRO_0000443467" description="Averufin oxidase A">
    <location>
        <begin position="24"/>
        <end position="301"/>
    </location>
</feature>
<feature type="glycosylation site" description="N-linked (GlcNAc...) asparagine" evidence="3">
    <location>
        <position position="62"/>
    </location>
</feature>
<feature type="glycosylation site" description="N-linked (GlcNAc...) asparagine" evidence="3">
    <location>
        <position position="86"/>
    </location>
</feature>
<feature type="glycosylation site" description="N-linked (GlcNAc...) asparagine" evidence="3">
    <location>
        <position position="190"/>
    </location>
</feature>